<accession>Q8RWF5</accession>
<accession>Q9SIA0</accession>
<evidence type="ECO:0000255" key="1"/>
<evidence type="ECO:0000303" key="2">
    <source>
    </source>
</evidence>
<evidence type="ECO:0000305" key="3"/>
<evidence type="ECO:0000312" key="4">
    <source>
        <dbReference type="Araport" id="AT2G04100"/>
    </source>
</evidence>
<evidence type="ECO:0000312" key="5">
    <source>
        <dbReference type="EMBL" id="AAD28682.1"/>
    </source>
</evidence>
<gene>
    <name evidence="2" type="primary">DTX6</name>
    <name evidence="4" type="ordered locus">At2g04100</name>
    <name evidence="5" type="ORF">F3L12.7</name>
</gene>
<keyword id="KW-0472">Membrane</keyword>
<keyword id="KW-1185">Reference proteome</keyword>
<keyword id="KW-0812">Transmembrane</keyword>
<keyword id="KW-1133">Transmembrane helix</keyword>
<keyword id="KW-0813">Transport</keyword>
<dbReference type="EMBL" id="AC007178">
    <property type="protein sequence ID" value="AAD28682.1"/>
    <property type="status" value="ALT_SEQ"/>
    <property type="molecule type" value="Genomic_DNA"/>
</dbReference>
<dbReference type="EMBL" id="CP002685">
    <property type="protein sequence ID" value="AEC05799.1"/>
    <property type="molecule type" value="Genomic_DNA"/>
</dbReference>
<dbReference type="EMBL" id="AY093126">
    <property type="protein sequence ID" value="AAM13125.1"/>
    <property type="molecule type" value="mRNA"/>
</dbReference>
<dbReference type="EMBL" id="BT006624">
    <property type="protein sequence ID" value="AAP31968.1"/>
    <property type="molecule type" value="mRNA"/>
</dbReference>
<dbReference type="PIR" id="F84454">
    <property type="entry name" value="F84454"/>
</dbReference>
<dbReference type="RefSeq" id="NP_178499.2">
    <property type="nucleotide sequence ID" value="NM_126451.5"/>
</dbReference>
<dbReference type="SMR" id="Q8RWF5"/>
<dbReference type="BioGRID" id="347">
    <property type="interactions" value="5"/>
</dbReference>
<dbReference type="FunCoup" id="Q8RWF5">
    <property type="interactions" value="308"/>
</dbReference>
<dbReference type="IntAct" id="Q8RWF5">
    <property type="interactions" value="1"/>
</dbReference>
<dbReference type="STRING" id="3702.Q8RWF5"/>
<dbReference type="PaxDb" id="3702-AT2G04100.1"/>
<dbReference type="EnsemblPlants" id="AT2G04100.1">
    <property type="protein sequence ID" value="AT2G04100.1"/>
    <property type="gene ID" value="AT2G04100"/>
</dbReference>
<dbReference type="GeneID" id="814946"/>
<dbReference type="Gramene" id="AT2G04100.1">
    <property type="protein sequence ID" value="AT2G04100.1"/>
    <property type="gene ID" value="AT2G04100"/>
</dbReference>
<dbReference type="KEGG" id="ath:AT2G04100"/>
<dbReference type="Araport" id="AT2G04100"/>
<dbReference type="TAIR" id="AT2G04100"/>
<dbReference type="eggNOG" id="KOG1347">
    <property type="taxonomic scope" value="Eukaryota"/>
</dbReference>
<dbReference type="HOGENOM" id="CLU_012893_1_0_1"/>
<dbReference type="InParanoid" id="Q8RWF5"/>
<dbReference type="OrthoDB" id="2126698at2759"/>
<dbReference type="PhylomeDB" id="Q8RWF5"/>
<dbReference type="PRO" id="PR:Q8RWF5"/>
<dbReference type="Proteomes" id="UP000006548">
    <property type="component" value="Chromosome 2"/>
</dbReference>
<dbReference type="ExpressionAtlas" id="Q8RWF5">
    <property type="expression patterns" value="baseline and differential"/>
</dbReference>
<dbReference type="GO" id="GO:0016020">
    <property type="term" value="C:membrane"/>
    <property type="evidence" value="ECO:0007669"/>
    <property type="project" value="UniProtKB-SubCell"/>
</dbReference>
<dbReference type="GO" id="GO:0015297">
    <property type="term" value="F:antiporter activity"/>
    <property type="evidence" value="ECO:0007669"/>
    <property type="project" value="InterPro"/>
</dbReference>
<dbReference type="GO" id="GO:0042910">
    <property type="term" value="F:xenobiotic transmembrane transporter activity"/>
    <property type="evidence" value="ECO:0007669"/>
    <property type="project" value="InterPro"/>
</dbReference>
<dbReference type="GO" id="GO:1990961">
    <property type="term" value="P:xenobiotic detoxification by transmembrane export across the plasma membrane"/>
    <property type="evidence" value="ECO:0007669"/>
    <property type="project" value="InterPro"/>
</dbReference>
<dbReference type="CDD" id="cd13132">
    <property type="entry name" value="MATE_eukaryotic"/>
    <property type="match status" value="1"/>
</dbReference>
<dbReference type="InterPro" id="IPR045069">
    <property type="entry name" value="MATE_euk"/>
</dbReference>
<dbReference type="InterPro" id="IPR002528">
    <property type="entry name" value="MATE_fam"/>
</dbReference>
<dbReference type="NCBIfam" id="TIGR00797">
    <property type="entry name" value="matE"/>
    <property type="match status" value="1"/>
</dbReference>
<dbReference type="PANTHER" id="PTHR11206">
    <property type="entry name" value="MULTIDRUG RESISTANCE PROTEIN"/>
    <property type="match status" value="1"/>
</dbReference>
<dbReference type="Pfam" id="PF01554">
    <property type="entry name" value="MatE"/>
    <property type="match status" value="2"/>
</dbReference>
<sequence length="483" mass="51933">MEDPLLLGDNQIITGSLKPTPTWRMNFTAELKNLSRMALPMATVTVAQYLLPVISVMVAGHRSELQLSGVALATSFTNVSGFSVMFGLAGALETLCGQAYGAKQYAKIGTYTFSAIVSNVPIVVLISILWFYMDKLFVSLGQDPDISKVAGSYAVCLIPALLAQAVQQPLTRFLQTQGLVLPLLYCAITTLLFHIPVCLILVYAFGLGSNGAALAIGLSYWFNVLILALYVRFSSSCEKTRGFVSDDFVLSVKQFFQYGIPSAAMTTIEWSLFEFLILSSGLLPNPKLETSVLSICLTTSSLHYVIPMGIGAAGSIRVSNELGAGNPEVARLAVFAGIFLWFLEATICSTLLFICRDIFGYAFSNSKEVVDYVTELSPLLCISFLVDGFSAVLGGVARGSGWQHIGAWANVVAYYLLGAPVGLFLGFWCHMNGKGLWIGVVVGSTAQGIILAIVTACMSWNEQAAKARQRIVVRTSSFGNGLA</sequence>
<proteinExistence type="evidence at transcript level"/>
<protein>
    <recommendedName>
        <fullName evidence="2">Protein DETOXIFICATION 6</fullName>
        <shortName evidence="2">AtDTX6</shortName>
    </recommendedName>
    <alternativeName>
        <fullName evidence="3">Multidrug and toxic compound extrusion protein 6</fullName>
        <shortName evidence="3">MATE protein 6</shortName>
    </alternativeName>
</protein>
<feature type="chain" id="PRO_0000405324" description="Protein DETOXIFICATION 6">
    <location>
        <begin position="1"/>
        <end position="483"/>
    </location>
</feature>
<feature type="transmembrane region" description="Helical" evidence="1">
    <location>
        <begin position="38"/>
        <end position="58"/>
    </location>
</feature>
<feature type="transmembrane region" description="Helical" evidence="1">
    <location>
        <begin position="69"/>
        <end position="89"/>
    </location>
</feature>
<feature type="transmembrane region" description="Helical" evidence="1">
    <location>
        <begin position="113"/>
        <end position="133"/>
    </location>
</feature>
<feature type="transmembrane region" description="Helical" evidence="1">
    <location>
        <begin position="146"/>
        <end position="166"/>
    </location>
</feature>
<feature type="transmembrane region" description="Helical" evidence="1">
    <location>
        <begin position="187"/>
        <end position="207"/>
    </location>
</feature>
<feature type="transmembrane region" description="Helical" evidence="1">
    <location>
        <begin position="211"/>
        <end position="231"/>
    </location>
</feature>
<feature type="transmembrane region" description="Helical" evidence="1">
    <location>
        <begin position="263"/>
        <end position="283"/>
    </location>
</feature>
<feature type="transmembrane region" description="Helical" evidence="1">
    <location>
        <begin position="292"/>
        <end position="312"/>
    </location>
</feature>
<feature type="transmembrane region" description="Helical" evidence="1">
    <location>
        <begin position="334"/>
        <end position="354"/>
    </location>
</feature>
<feature type="transmembrane region" description="Helical" evidence="1">
    <location>
        <begin position="376"/>
        <end position="396"/>
    </location>
</feature>
<feature type="transmembrane region" description="Helical" evidence="1">
    <location>
        <begin position="405"/>
        <end position="425"/>
    </location>
</feature>
<feature type="transmembrane region" description="Helical" evidence="1">
    <location>
        <begin position="436"/>
        <end position="456"/>
    </location>
</feature>
<reference key="1">
    <citation type="journal article" date="1999" name="Nature">
        <title>Sequence and analysis of chromosome 2 of the plant Arabidopsis thaliana.</title>
        <authorList>
            <person name="Lin X."/>
            <person name="Kaul S."/>
            <person name="Rounsley S.D."/>
            <person name="Shea T.P."/>
            <person name="Benito M.-I."/>
            <person name="Town C.D."/>
            <person name="Fujii C.Y."/>
            <person name="Mason T.M."/>
            <person name="Bowman C.L."/>
            <person name="Barnstead M.E."/>
            <person name="Feldblyum T.V."/>
            <person name="Buell C.R."/>
            <person name="Ketchum K.A."/>
            <person name="Lee J.J."/>
            <person name="Ronning C.M."/>
            <person name="Koo H.L."/>
            <person name="Moffat K.S."/>
            <person name="Cronin L.A."/>
            <person name="Shen M."/>
            <person name="Pai G."/>
            <person name="Van Aken S."/>
            <person name="Umayam L."/>
            <person name="Tallon L.J."/>
            <person name="Gill J.E."/>
            <person name="Adams M.D."/>
            <person name="Carrera A.J."/>
            <person name="Creasy T.H."/>
            <person name="Goodman H.M."/>
            <person name="Somerville C.R."/>
            <person name="Copenhaver G.P."/>
            <person name="Preuss D."/>
            <person name="Nierman W.C."/>
            <person name="White O."/>
            <person name="Eisen J.A."/>
            <person name="Salzberg S.L."/>
            <person name="Fraser C.M."/>
            <person name="Venter J.C."/>
        </authorList>
    </citation>
    <scope>NUCLEOTIDE SEQUENCE [LARGE SCALE GENOMIC DNA]</scope>
    <source>
        <strain>cv. Columbia</strain>
    </source>
</reference>
<reference key="2">
    <citation type="journal article" date="2017" name="Plant J.">
        <title>Araport11: a complete reannotation of the Arabidopsis thaliana reference genome.</title>
        <authorList>
            <person name="Cheng C.Y."/>
            <person name="Krishnakumar V."/>
            <person name="Chan A.P."/>
            <person name="Thibaud-Nissen F."/>
            <person name="Schobel S."/>
            <person name="Town C.D."/>
        </authorList>
    </citation>
    <scope>GENOME REANNOTATION</scope>
    <source>
        <strain>cv. Columbia</strain>
    </source>
</reference>
<reference key="3">
    <citation type="journal article" date="2003" name="Science">
        <title>Empirical analysis of transcriptional activity in the Arabidopsis genome.</title>
        <authorList>
            <person name="Yamada K."/>
            <person name="Lim J."/>
            <person name="Dale J.M."/>
            <person name="Chen H."/>
            <person name="Shinn P."/>
            <person name="Palm C.J."/>
            <person name="Southwick A.M."/>
            <person name="Wu H.C."/>
            <person name="Kim C.J."/>
            <person name="Nguyen M."/>
            <person name="Pham P.K."/>
            <person name="Cheuk R.F."/>
            <person name="Karlin-Newmann G."/>
            <person name="Liu S.X."/>
            <person name="Lam B."/>
            <person name="Sakano H."/>
            <person name="Wu T."/>
            <person name="Yu G."/>
            <person name="Miranda M."/>
            <person name="Quach H.L."/>
            <person name="Tripp M."/>
            <person name="Chang C.H."/>
            <person name="Lee J.M."/>
            <person name="Toriumi M.J."/>
            <person name="Chan M.M."/>
            <person name="Tang C.C."/>
            <person name="Onodera C.S."/>
            <person name="Deng J.M."/>
            <person name="Akiyama K."/>
            <person name="Ansari Y."/>
            <person name="Arakawa T."/>
            <person name="Banh J."/>
            <person name="Banno F."/>
            <person name="Bowser L."/>
            <person name="Brooks S.Y."/>
            <person name="Carninci P."/>
            <person name="Chao Q."/>
            <person name="Choy N."/>
            <person name="Enju A."/>
            <person name="Goldsmith A.D."/>
            <person name="Gurjal M."/>
            <person name="Hansen N.F."/>
            <person name="Hayashizaki Y."/>
            <person name="Johnson-Hopson C."/>
            <person name="Hsuan V.W."/>
            <person name="Iida K."/>
            <person name="Karnes M."/>
            <person name="Khan S."/>
            <person name="Koesema E."/>
            <person name="Ishida J."/>
            <person name="Jiang P.X."/>
            <person name="Jones T."/>
            <person name="Kawai J."/>
            <person name="Kamiya A."/>
            <person name="Meyers C."/>
            <person name="Nakajima M."/>
            <person name="Narusaka M."/>
            <person name="Seki M."/>
            <person name="Sakurai T."/>
            <person name="Satou M."/>
            <person name="Tamse R."/>
            <person name="Vaysberg M."/>
            <person name="Wallender E.K."/>
            <person name="Wong C."/>
            <person name="Yamamura Y."/>
            <person name="Yuan S."/>
            <person name="Shinozaki K."/>
            <person name="Davis R.W."/>
            <person name="Theologis A."/>
            <person name="Ecker J.R."/>
        </authorList>
    </citation>
    <scope>NUCLEOTIDE SEQUENCE [LARGE SCALE MRNA]</scope>
    <source>
        <strain>cv. Columbia</strain>
    </source>
</reference>
<reference key="4">
    <citation type="journal article" date="2002" name="J. Biol. Chem.">
        <title>Functional cloning and characterization of a plant efflux carrier for multidrug and heavy metal detoxification.</title>
        <authorList>
            <person name="Li L."/>
            <person name="He Z."/>
            <person name="Pandey G.K."/>
            <person name="Tsuchiya T."/>
            <person name="Luan S."/>
        </authorList>
    </citation>
    <scope>GENE FAMILY</scope>
    <scope>NOMENCLATURE</scope>
</reference>
<reference key="5">
    <citation type="journal article" date="2003" name="Eur. J. Biochem.">
        <title>The multidrug/oligosaccharidyl-lipid/polysaccharide (MOP) exporter superfamily.</title>
        <authorList>
            <person name="Hvorup R.N."/>
            <person name="Winnen B."/>
            <person name="Chang A.B."/>
            <person name="Jiang Y."/>
            <person name="Zhou X.F."/>
            <person name="Saier M.H. Jr."/>
        </authorList>
    </citation>
    <scope>GENE FAMILY</scope>
</reference>
<comment type="subcellular location">
    <subcellularLocation>
        <location evidence="1">Membrane</location>
        <topology evidence="1">Multi-pass membrane protein</topology>
    </subcellularLocation>
</comment>
<comment type="similarity">
    <text evidence="3">Belongs to the multi antimicrobial extrusion (MATE) (TC 2.A.66.1) family.</text>
</comment>
<comment type="sequence caution" evidence="3">
    <conflict type="erroneous gene model prediction">
        <sequence resource="EMBL-CDS" id="AAD28682"/>
    </conflict>
</comment>
<organism>
    <name type="scientific">Arabidopsis thaliana</name>
    <name type="common">Mouse-ear cress</name>
    <dbReference type="NCBI Taxonomy" id="3702"/>
    <lineage>
        <taxon>Eukaryota</taxon>
        <taxon>Viridiplantae</taxon>
        <taxon>Streptophyta</taxon>
        <taxon>Embryophyta</taxon>
        <taxon>Tracheophyta</taxon>
        <taxon>Spermatophyta</taxon>
        <taxon>Magnoliopsida</taxon>
        <taxon>eudicotyledons</taxon>
        <taxon>Gunneridae</taxon>
        <taxon>Pentapetalae</taxon>
        <taxon>rosids</taxon>
        <taxon>malvids</taxon>
        <taxon>Brassicales</taxon>
        <taxon>Brassicaceae</taxon>
        <taxon>Camelineae</taxon>
        <taxon>Arabidopsis</taxon>
    </lineage>
</organism>
<name>DTX6_ARATH</name>